<comment type="interaction">
    <interactant intactId="EBI-752049">
        <id>Q8NEG0</id>
    </interactant>
    <interactant intactId="EBI-744695">
        <id>Q8N9N5</id>
        <label>BANP</label>
    </interactant>
    <organismsDiffer>false</organismsDiffer>
    <experiments>3</experiments>
</comment>
<comment type="interaction">
    <interactant intactId="EBI-752049">
        <id>Q8NEG0</id>
    </interactant>
    <interactant intactId="EBI-3867333">
        <id>A8MQ03</id>
        <label>CYSRT1</label>
    </interactant>
    <organismsDiffer>false</organismsDiffer>
    <experiments>3</experiments>
</comment>
<comment type="interaction">
    <interactant intactId="EBI-752049">
        <id>Q8NEG0</id>
    </interactant>
    <interactant intactId="EBI-741101">
        <id>Q13643</id>
        <label>FHL3</label>
    </interactant>
    <organismsDiffer>false</organismsDiffer>
    <experiments>3</experiments>
</comment>
<comment type="interaction">
    <interactant intactId="EBI-752049">
        <id>Q8NEG0</id>
    </interactant>
    <interactant intactId="EBI-750641">
        <id>Q5TD97</id>
        <label>FHL5</label>
    </interactant>
    <organismsDiffer>false</organismsDiffer>
    <experiments>5</experiments>
</comment>
<comment type="interaction">
    <interactant intactId="EBI-752049">
        <id>Q8NEG0</id>
    </interactant>
    <interactant intactId="EBI-948001">
        <id>Q15323</id>
        <label>KRT31</label>
    </interactant>
    <organismsDiffer>false</organismsDiffer>
    <experiments>6</experiments>
</comment>
<comment type="interaction">
    <interactant intactId="EBI-752049">
        <id>Q8NEG0</id>
    </interactant>
    <interactant intactId="EBI-1047093">
        <id>O76011</id>
        <label>KRT34</label>
    </interactant>
    <organismsDiffer>false</organismsDiffer>
    <experiments>3</experiments>
</comment>
<comment type="interaction">
    <interactant intactId="EBI-752049">
        <id>Q8NEG0</id>
    </interactant>
    <interactant intactId="EBI-10171697">
        <id>Q6A162</id>
        <label>KRT40</label>
    </interactant>
    <organismsDiffer>false</organismsDiffer>
    <experiments>3</experiments>
</comment>
<comment type="interaction">
    <interactant intactId="EBI-752049">
        <id>Q8NEG0</id>
    </interactant>
    <interactant intactId="EBI-11959885">
        <id>Q07627</id>
        <label>KRTAP1-1</label>
    </interactant>
    <organismsDiffer>false</organismsDiffer>
    <experiments>3</experiments>
</comment>
<comment type="interaction">
    <interactant intactId="EBI-752049">
        <id>Q8NEG0</id>
    </interactant>
    <interactant intactId="EBI-10171774">
        <id>P60410</id>
        <label>KRTAP10-8</label>
    </interactant>
    <organismsDiffer>false</organismsDiffer>
    <experiments>3</experiments>
</comment>
<comment type="interaction">
    <interactant intactId="EBI-752049">
        <id>Q8NEG0</id>
    </interactant>
    <interactant intactId="EBI-751260">
        <id>Q9BYR7</id>
        <label>KRTAP3-2</label>
    </interactant>
    <organismsDiffer>false</organismsDiffer>
    <experiments>3</experiments>
</comment>
<comment type="interaction">
    <interactant intactId="EBI-752049">
        <id>Q8NEG0</id>
    </interactant>
    <interactant intactId="EBI-945833">
        <id>Q7Z3S9</id>
        <label>NOTCH2NLA</label>
    </interactant>
    <organismsDiffer>false</organismsDiffer>
    <experiments>3</experiments>
</comment>
<comment type="interaction">
    <interactant intactId="EBI-752049">
        <id>Q8NEG0</id>
    </interactant>
    <interactant intactId="EBI-22310682">
        <id>P0DPK4</id>
        <label>NOTCH2NLC</label>
    </interactant>
    <organismsDiffer>false</organismsDiffer>
    <experiments>3</experiments>
</comment>
<comment type="interaction">
    <interactant intactId="EBI-752049">
        <id>Q8NEG0</id>
    </interactant>
    <interactant intactId="EBI-395883">
        <id>P07237</id>
        <label>P4HB</label>
    </interactant>
    <organismsDiffer>false</organismsDiffer>
    <experiments>3</experiments>
</comment>
<comment type="interaction">
    <interactant intactId="EBI-752049">
        <id>Q8NEG0</id>
    </interactant>
    <interactant intactId="EBI-350517">
        <id>Q9NR12</id>
        <label>PDLIM7</label>
    </interactant>
    <organismsDiffer>false</organismsDiffer>
    <experiments>3</experiments>
</comment>
<comment type="interaction">
    <interactant intactId="EBI-752049">
        <id>Q8NEG0</id>
    </interactant>
    <interactant intactId="EBI-1056404">
        <id>P61106</id>
        <label>RAB14</label>
    </interactant>
    <organismsDiffer>false</organismsDiffer>
    <experiments>3</experiments>
</comment>
<comment type="interaction">
    <interactant intactId="EBI-752049">
        <id>Q8NEG0</id>
    </interactant>
    <interactant intactId="EBI-752037">
        <id>P61019</id>
        <label>RAB2A</label>
    </interactant>
    <organismsDiffer>false</organismsDiffer>
    <experiments>7</experiments>
</comment>
<comment type="interaction">
    <interactant intactId="EBI-752049">
        <id>Q8NEG0</id>
    </interactant>
    <interactant intactId="EBI-5542466">
        <id>Q8WUD1</id>
        <label>RAB2B</label>
    </interactant>
    <organismsDiffer>false</organismsDiffer>
    <experiments>8</experiments>
</comment>
<comment type="interaction">
    <interactant intactId="EBI-752049">
        <id>Q8NEG0</id>
    </interactant>
    <interactant intactId="EBI-722284">
        <id>P20338</id>
        <label>RAB4A</label>
    </interactant>
    <organismsDiffer>false</organismsDiffer>
    <experiments>3</experiments>
</comment>
<comment type="interaction">
    <interactant intactId="EBI-752049">
        <id>Q8NEG0</id>
    </interactant>
    <interactant intactId="EBI-10218066">
        <id>P61018</id>
        <label>RAB4B</label>
    </interactant>
    <organismsDiffer>false</organismsDiffer>
    <experiments>3</experiments>
</comment>
<comment type="similarity">
    <text evidence="1">Belongs to the GARIN family.</text>
</comment>
<reference key="1">
    <citation type="journal article" date="2004" name="Nat. Genet.">
        <title>Complete sequencing and characterization of 21,243 full-length human cDNAs.</title>
        <authorList>
            <person name="Ota T."/>
            <person name="Suzuki Y."/>
            <person name="Nishikawa T."/>
            <person name="Otsuki T."/>
            <person name="Sugiyama T."/>
            <person name="Irie R."/>
            <person name="Wakamatsu A."/>
            <person name="Hayashi K."/>
            <person name="Sato H."/>
            <person name="Nagai K."/>
            <person name="Kimura K."/>
            <person name="Makita H."/>
            <person name="Sekine M."/>
            <person name="Obayashi M."/>
            <person name="Nishi T."/>
            <person name="Shibahara T."/>
            <person name="Tanaka T."/>
            <person name="Ishii S."/>
            <person name="Yamamoto J."/>
            <person name="Saito K."/>
            <person name="Kawai Y."/>
            <person name="Isono Y."/>
            <person name="Nakamura Y."/>
            <person name="Nagahari K."/>
            <person name="Murakami K."/>
            <person name="Yasuda T."/>
            <person name="Iwayanagi T."/>
            <person name="Wagatsuma M."/>
            <person name="Shiratori A."/>
            <person name="Sudo H."/>
            <person name="Hosoiri T."/>
            <person name="Kaku Y."/>
            <person name="Kodaira H."/>
            <person name="Kondo H."/>
            <person name="Sugawara M."/>
            <person name="Takahashi M."/>
            <person name="Kanda K."/>
            <person name="Yokoi T."/>
            <person name="Furuya T."/>
            <person name="Kikkawa E."/>
            <person name="Omura Y."/>
            <person name="Abe K."/>
            <person name="Kamihara K."/>
            <person name="Katsuta N."/>
            <person name="Sato K."/>
            <person name="Tanikawa M."/>
            <person name="Yamazaki M."/>
            <person name="Ninomiya K."/>
            <person name="Ishibashi T."/>
            <person name="Yamashita H."/>
            <person name="Murakawa K."/>
            <person name="Fujimori K."/>
            <person name="Tanai H."/>
            <person name="Kimata M."/>
            <person name="Watanabe M."/>
            <person name="Hiraoka S."/>
            <person name="Chiba Y."/>
            <person name="Ishida S."/>
            <person name="Ono Y."/>
            <person name="Takiguchi S."/>
            <person name="Watanabe S."/>
            <person name="Yosida M."/>
            <person name="Hotuta T."/>
            <person name="Kusano J."/>
            <person name="Kanehori K."/>
            <person name="Takahashi-Fujii A."/>
            <person name="Hara H."/>
            <person name="Tanase T.-O."/>
            <person name="Nomura Y."/>
            <person name="Togiya S."/>
            <person name="Komai F."/>
            <person name="Hara R."/>
            <person name="Takeuchi K."/>
            <person name="Arita M."/>
            <person name="Imose N."/>
            <person name="Musashino K."/>
            <person name="Yuuki H."/>
            <person name="Oshima A."/>
            <person name="Sasaki N."/>
            <person name="Aotsuka S."/>
            <person name="Yoshikawa Y."/>
            <person name="Matsunawa H."/>
            <person name="Ichihara T."/>
            <person name="Shiohata N."/>
            <person name="Sano S."/>
            <person name="Moriya S."/>
            <person name="Momiyama H."/>
            <person name="Satoh N."/>
            <person name="Takami S."/>
            <person name="Terashima Y."/>
            <person name="Suzuki O."/>
            <person name="Nakagawa S."/>
            <person name="Senoh A."/>
            <person name="Mizoguchi H."/>
            <person name="Goto Y."/>
            <person name="Shimizu F."/>
            <person name="Wakebe H."/>
            <person name="Hishigaki H."/>
            <person name="Watanabe T."/>
            <person name="Sugiyama A."/>
            <person name="Takemoto M."/>
            <person name="Kawakami B."/>
            <person name="Yamazaki M."/>
            <person name="Watanabe K."/>
            <person name="Kumagai A."/>
            <person name="Itakura S."/>
            <person name="Fukuzumi Y."/>
            <person name="Fujimori Y."/>
            <person name="Komiyama M."/>
            <person name="Tashiro H."/>
            <person name="Tanigami A."/>
            <person name="Fujiwara T."/>
            <person name="Ono T."/>
            <person name="Yamada K."/>
            <person name="Fujii Y."/>
            <person name="Ozaki K."/>
            <person name="Hirao M."/>
            <person name="Ohmori Y."/>
            <person name="Kawabata A."/>
            <person name="Hikiji T."/>
            <person name="Kobatake N."/>
            <person name="Inagaki H."/>
            <person name="Ikema Y."/>
            <person name="Okamoto S."/>
            <person name="Okitani R."/>
            <person name="Kawakami T."/>
            <person name="Noguchi S."/>
            <person name="Itoh T."/>
            <person name="Shigeta K."/>
            <person name="Senba T."/>
            <person name="Matsumura K."/>
            <person name="Nakajima Y."/>
            <person name="Mizuno T."/>
            <person name="Morinaga M."/>
            <person name="Sasaki M."/>
            <person name="Togashi T."/>
            <person name="Oyama M."/>
            <person name="Hata H."/>
            <person name="Watanabe M."/>
            <person name="Komatsu T."/>
            <person name="Mizushima-Sugano J."/>
            <person name="Satoh T."/>
            <person name="Shirai Y."/>
            <person name="Takahashi Y."/>
            <person name="Nakagawa K."/>
            <person name="Okumura K."/>
            <person name="Nagase T."/>
            <person name="Nomura N."/>
            <person name="Kikuchi H."/>
            <person name="Masuho Y."/>
            <person name="Yamashita R."/>
            <person name="Nakai K."/>
            <person name="Yada T."/>
            <person name="Nakamura Y."/>
            <person name="Ohara O."/>
            <person name="Isogai T."/>
            <person name="Sugano S."/>
        </authorList>
    </citation>
    <scope>NUCLEOTIDE SEQUENCE [LARGE SCALE MRNA]</scope>
    <source>
        <tissue>Testis</tissue>
    </source>
</reference>
<reference key="2">
    <citation type="journal article" date="2004" name="Genome Res.">
        <title>The status, quality, and expansion of the NIH full-length cDNA project: the Mammalian Gene Collection (MGC).</title>
        <authorList>
            <consortium name="The MGC Project Team"/>
        </authorList>
    </citation>
    <scope>NUCLEOTIDE SEQUENCE [LARGE SCALE MRNA]</scope>
    <source>
        <tissue>Testis</tissue>
    </source>
</reference>
<organism>
    <name type="scientific">Homo sapiens</name>
    <name type="common">Human</name>
    <dbReference type="NCBI Taxonomy" id="9606"/>
    <lineage>
        <taxon>Eukaryota</taxon>
        <taxon>Metazoa</taxon>
        <taxon>Chordata</taxon>
        <taxon>Craniata</taxon>
        <taxon>Vertebrata</taxon>
        <taxon>Euteleostomi</taxon>
        <taxon>Mammalia</taxon>
        <taxon>Eutheria</taxon>
        <taxon>Euarchontoglires</taxon>
        <taxon>Primates</taxon>
        <taxon>Haplorrhini</taxon>
        <taxon>Catarrhini</taxon>
        <taxon>Hominidae</taxon>
        <taxon>Homo</taxon>
    </lineage>
</organism>
<dbReference type="EMBL" id="AK312767">
    <property type="protein sequence ID" value="BAG35633.1"/>
    <property type="molecule type" value="mRNA"/>
</dbReference>
<dbReference type="EMBL" id="BC031221">
    <property type="protein sequence ID" value="AAH31221.1"/>
    <property type="molecule type" value="mRNA"/>
</dbReference>
<dbReference type="CCDS" id="CCDS9072.1"/>
<dbReference type="RefSeq" id="NP_699195.1">
    <property type="nucleotide sequence ID" value="NM_153364.4"/>
</dbReference>
<dbReference type="BioGRID" id="128210">
    <property type="interactions" value="20"/>
</dbReference>
<dbReference type="FunCoup" id="Q8NEG0">
    <property type="interactions" value="79"/>
</dbReference>
<dbReference type="IntAct" id="Q8NEG0">
    <property type="interactions" value="22"/>
</dbReference>
<dbReference type="MINT" id="Q8NEG0"/>
<dbReference type="STRING" id="9606.ENSP00000315247"/>
<dbReference type="BioMuta" id="FAM71C"/>
<dbReference type="DMDM" id="74730248"/>
<dbReference type="MassIVE" id="Q8NEG0"/>
<dbReference type="PaxDb" id="9606-ENSP00000315247"/>
<dbReference type="PeptideAtlas" id="Q8NEG0"/>
<dbReference type="ProteomicsDB" id="73160"/>
<dbReference type="Antibodypedia" id="51045">
    <property type="antibodies" value="34 antibodies from 9 providers"/>
</dbReference>
<dbReference type="DNASU" id="196472"/>
<dbReference type="Ensembl" id="ENST00000324341.2">
    <property type="protein sequence ID" value="ENSP00000315247.1"/>
    <property type="gene ID" value="ENSG00000180219.2"/>
</dbReference>
<dbReference type="GeneID" id="196472"/>
<dbReference type="KEGG" id="hsa:196472"/>
<dbReference type="MANE-Select" id="ENST00000324341.2">
    <property type="protein sequence ID" value="ENSP00000315247.1"/>
    <property type="RefSeq nucleotide sequence ID" value="NM_153364.4"/>
    <property type="RefSeq protein sequence ID" value="NP_699195.1"/>
</dbReference>
<dbReference type="UCSC" id="uc001tgn.4">
    <property type="organism name" value="human"/>
</dbReference>
<dbReference type="AGR" id="HGNC:28594"/>
<dbReference type="CTD" id="196472"/>
<dbReference type="GeneCards" id="GARIN6"/>
<dbReference type="HGNC" id="HGNC:28594">
    <property type="gene designation" value="GARIN6"/>
</dbReference>
<dbReference type="HPA" id="ENSG00000180219">
    <property type="expression patterns" value="Tissue enriched (testis)"/>
</dbReference>
<dbReference type="neXtProt" id="NX_Q8NEG0"/>
<dbReference type="OpenTargets" id="ENSG00000180219"/>
<dbReference type="VEuPathDB" id="HostDB:ENSG00000180219"/>
<dbReference type="eggNOG" id="ENOG502RWWU">
    <property type="taxonomic scope" value="Eukaryota"/>
</dbReference>
<dbReference type="GeneTree" id="ENSGT00940000163320"/>
<dbReference type="HOGENOM" id="CLU_100265_0_0_1"/>
<dbReference type="InParanoid" id="Q8NEG0"/>
<dbReference type="OMA" id="HWENLIY"/>
<dbReference type="OrthoDB" id="9942703at2759"/>
<dbReference type="PAN-GO" id="Q8NEG0">
    <property type="GO annotations" value="0 GO annotations based on evolutionary models"/>
</dbReference>
<dbReference type="PhylomeDB" id="Q8NEG0"/>
<dbReference type="TreeFam" id="TF336050"/>
<dbReference type="PathwayCommons" id="Q8NEG0"/>
<dbReference type="SignaLink" id="Q8NEG0"/>
<dbReference type="BioGRID-ORCS" id="196472">
    <property type="hits" value="6 hits in 1146 CRISPR screens"/>
</dbReference>
<dbReference type="GenomeRNAi" id="196472"/>
<dbReference type="Pharos" id="Q8NEG0">
    <property type="development level" value="Tdark"/>
</dbReference>
<dbReference type="PRO" id="PR:Q8NEG0"/>
<dbReference type="Proteomes" id="UP000005640">
    <property type="component" value="Chromosome 12"/>
</dbReference>
<dbReference type="RNAct" id="Q8NEG0">
    <property type="molecule type" value="protein"/>
</dbReference>
<dbReference type="Bgee" id="ENSG00000180219">
    <property type="expression patterns" value="Expressed in sperm and 23 other cell types or tissues"/>
</dbReference>
<dbReference type="InterPro" id="IPR022168">
    <property type="entry name" value="GARIL-like_Rab2B-bd"/>
</dbReference>
<dbReference type="PANTHER" id="PTHR22574">
    <property type="match status" value="1"/>
</dbReference>
<dbReference type="PANTHER" id="PTHR22574:SF11">
    <property type="entry name" value="GOLGI-ASSOCIATED RAB2 INTERACTOR PROTEIN 6"/>
    <property type="match status" value="1"/>
</dbReference>
<dbReference type="Pfam" id="PF12480">
    <property type="entry name" value="GARIL_Rab2_bd"/>
    <property type="match status" value="1"/>
</dbReference>
<proteinExistence type="evidence at protein level"/>
<name>GAR6_HUMAN</name>
<accession>Q8NEG0</accession>
<accession>B2R6Y6</accession>
<gene>
    <name evidence="2" type="primary">GARIN6</name>
    <name type="synonym">FAM71C</name>
</gene>
<protein>
    <recommendedName>
        <fullName evidence="1">Golgi-associated RAB2 interactor protein 6</fullName>
    </recommendedName>
</protein>
<evidence type="ECO:0000305" key="1"/>
<evidence type="ECO:0000312" key="2">
    <source>
        <dbReference type="HGNC" id="HGNC:28594"/>
    </source>
</evidence>
<sequence length="241" mass="27472">MEDCCMLPYYTAQSSPAMGMFNTSMGKLQRQLYKGEYTIFRYAPMFESDFIQISKRGEVIDVHNRARMVTMGIVRTSPCLTLPDVMLLARPAAVCDNARCGPATQKRESPPAEILELTRLLPLMFVKITIHNSVKKQLHLKLATGRSFYLQLCPPSDASEDLFVHWENLVYILRPPVEAYSDTRAILAGNTLDSSVLEEVQRSPVGYAMKFCEEKEQFRISRLHMNAEMFGSTYCDYTIEI</sequence>
<keyword id="KW-1267">Proteomics identification</keyword>
<keyword id="KW-1185">Reference proteome</keyword>
<feature type="chain" id="PRO_0000266044" description="Golgi-associated RAB2 interactor protein 6">
    <location>
        <begin position="1"/>
        <end position="241"/>
    </location>
</feature>
<feature type="sequence variant" id="VAR_029638" description="In dbSNP:rs11109968.">
    <original>R</original>
    <variation>G</variation>
    <location>
        <position position="30"/>
    </location>
</feature>
<feature type="sequence variant" id="VAR_029639" description="In dbSNP:rs11109969.">
    <original>M</original>
    <variation>V</variation>
    <location>
        <position position="71"/>
    </location>
</feature>
<feature type="sequence conflict" description="In Ref. 1; BAG35633." evidence="1" ref="1">
    <original>I</original>
    <variation>V</variation>
    <location>
        <position position="220"/>
    </location>
</feature>